<gene>
    <name evidence="1" type="primary">fbp</name>
    <name type="ordered locus">NMA1259</name>
</gene>
<keyword id="KW-0119">Carbohydrate metabolism</keyword>
<keyword id="KW-0963">Cytoplasm</keyword>
<keyword id="KW-0378">Hydrolase</keyword>
<keyword id="KW-0460">Magnesium</keyword>
<keyword id="KW-0479">Metal-binding</keyword>
<name>F16PA_NEIMA</name>
<organism>
    <name type="scientific">Neisseria meningitidis serogroup A / serotype 4A (strain DSM 15465 / Z2491)</name>
    <dbReference type="NCBI Taxonomy" id="122587"/>
    <lineage>
        <taxon>Bacteria</taxon>
        <taxon>Pseudomonadati</taxon>
        <taxon>Pseudomonadota</taxon>
        <taxon>Betaproteobacteria</taxon>
        <taxon>Neisseriales</taxon>
        <taxon>Neisseriaceae</taxon>
        <taxon>Neisseria</taxon>
    </lineage>
</organism>
<evidence type="ECO:0000255" key="1">
    <source>
        <dbReference type="HAMAP-Rule" id="MF_01855"/>
    </source>
</evidence>
<sequence length="324" mass="35551">MDTLTRFLPEHLQQNQLPEALGGVLLSVVSACTEINAKVRLGALAGVLGMAGTGNIQGEDQKKLDVIANNIMIDTLKANPAVAGLASEEEDSFVSAGENGRYLVLFDPLDGSSNIDVNISVGTIFSILEKPEGALATESFLQTGRQQLAAGYVLYGPQTQLVFTFGHGVYMFTLNAENEFVLTKEKPKVPESTKEFAINMSNRRHWLPPVQQYIDELLAGETGTRGKNYNMRWVASMVAEIHRILMRGGVFMYPQDKRDPSKPGKLRLMYEANPMALILEQAGASASNARQDILGIRPESLHQRVAVIMGSSEEVDYLNRLHSK</sequence>
<proteinExistence type="inferred from homology"/>
<accession>A1IRQ3</accession>
<feature type="chain" id="PRO_0000364607" description="Fructose-1,6-bisphosphatase class 1">
    <location>
        <begin position="1"/>
        <end position="324"/>
    </location>
</feature>
<feature type="binding site" evidence="1">
    <location>
        <position position="88"/>
    </location>
    <ligand>
        <name>Mg(2+)</name>
        <dbReference type="ChEBI" id="CHEBI:18420"/>
        <label>1</label>
    </ligand>
</feature>
<feature type="binding site" evidence="1">
    <location>
        <position position="107"/>
    </location>
    <ligand>
        <name>Mg(2+)</name>
        <dbReference type="ChEBI" id="CHEBI:18420"/>
        <label>1</label>
    </ligand>
</feature>
<feature type="binding site" evidence="1">
    <location>
        <position position="107"/>
    </location>
    <ligand>
        <name>Mg(2+)</name>
        <dbReference type="ChEBI" id="CHEBI:18420"/>
        <label>2</label>
    </ligand>
</feature>
<feature type="binding site" evidence="1">
    <location>
        <position position="109"/>
    </location>
    <ligand>
        <name>Mg(2+)</name>
        <dbReference type="ChEBI" id="CHEBI:18420"/>
        <label>1</label>
    </ligand>
</feature>
<feature type="binding site" evidence="1">
    <location>
        <begin position="110"/>
        <end position="113"/>
    </location>
    <ligand>
        <name>substrate</name>
    </ligand>
</feature>
<feature type="binding site" evidence="1">
    <location>
        <position position="110"/>
    </location>
    <ligand>
        <name>Mg(2+)</name>
        <dbReference type="ChEBI" id="CHEBI:18420"/>
        <label>2</label>
    </ligand>
</feature>
<feature type="binding site" evidence="1">
    <location>
        <position position="199"/>
    </location>
    <ligand>
        <name>substrate</name>
    </ligand>
</feature>
<feature type="binding site" evidence="1">
    <location>
        <position position="265"/>
    </location>
    <ligand>
        <name>substrate</name>
    </ligand>
</feature>
<feature type="binding site" evidence="1">
    <location>
        <position position="271"/>
    </location>
    <ligand>
        <name>Mg(2+)</name>
        <dbReference type="ChEBI" id="CHEBI:18420"/>
        <label>2</label>
    </ligand>
</feature>
<reference key="1">
    <citation type="journal article" date="2000" name="Nature">
        <title>Complete DNA sequence of a serogroup A strain of Neisseria meningitidis Z2491.</title>
        <authorList>
            <person name="Parkhill J."/>
            <person name="Achtman M."/>
            <person name="James K.D."/>
            <person name="Bentley S.D."/>
            <person name="Churcher C.M."/>
            <person name="Klee S.R."/>
            <person name="Morelli G."/>
            <person name="Basham D."/>
            <person name="Brown D."/>
            <person name="Chillingworth T."/>
            <person name="Davies R.M."/>
            <person name="Davis P."/>
            <person name="Devlin K."/>
            <person name="Feltwell T."/>
            <person name="Hamlin N."/>
            <person name="Holroyd S."/>
            <person name="Jagels K."/>
            <person name="Leather S."/>
            <person name="Moule S."/>
            <person name="Mungall K.L."/>
            <person name="Quail M.A."/>
            <person name="Rajandream M.A."/>
            <person name="Rutherford K.M."/>
            <person name="Simmonds M."/>
            <person name="Skelton J."/>
            <person name="Whitehead S."/>
            <person name="Spratt B.G."/>
            <person name="Barrell B.G."/>
        </authorList>
    </citation>
    <scope>NUCLEOTIDE SEQUENCE [LARGE SCALE GENOMIC DNA]</scope>
    <source>
        <strain>DSM 15465 / Z2491</strain>
    </source>
</reference>
<comment type="catalytic activity">
    <reaction evidence="1">
        <text>beta-D-fructose 1,6-bisphosphate + H2O = beta-D-fructose 6-phosphate + phosphate</text>
        <dbReference type="Rhea" id="RHEA:11064"/>
        <dbReference type="ChEBI" id="CHEBI:15377"/>
        <dbReference type="ChEBI" id="CHEBI:32966"/>
        <dbReference type="ChEBI" id="CHEBI:43474"/>
        <dbReference type="ChEBI" id="CHEBI:57634"/>
        <dbReference type="EC" id="3.1.3.11"/>
    </reaction>
</comment>
<comment type="cofactor">
    <cofactor evidence="1">
        <name>Mg(2+)</name>
        <dbReference type="ChEBI" id="CHEBI:18420"/>
    </cofactor>
    <text evidence="1">Binds 2 magnesium ions per subunit.</text>
</comment>
<comment type="pathway">
    <text evidence="1">Carbohydrate biosynthesis; gluconeogenesis.</text>
</comment>
<comment type="subunit">
    <text evidence="1">Homotetramer.</text>
</comment>
<comment type="subcellular location">
    <subcellularLocation>
        <location evidence="1">Cytoplasm</location>
    </subcellularLocation>
</comment>
<comment type="similarity">
    <text evidence="1">Belongs to the FBPase class 1 family.</text>
</comment>
<protein>
    <recommendedName>
        <fullName evidence="1">Fructose-1,6-bisphosphatase class 1</fullName>
        <shortName evidence="1">FBPase class 1</shortName>
        <ecNumber evidence="1">3.1.3.11</ecNumber>
    </recommendedName>
    <alternativeName>
        <fullName evidence="1">D-fructose-1,6-bisphosphate 1-phosphohydrolase class 1</fullName>
    </alternativeName>
</protein>
<dbReference type="EC" id="3.1.3.11" evidence="1"/>
<dbReference type="EMBL" id="AL157959">
    <property type="protein sequence ID" value="CAM08447.1"/>
    <property type="molecule type" value="Genomic_DNA"/>
</dbReference>
<dbReference type="PIR" id="A81894">
    <property type="entry name" value="A81894"/>
</dbReference>
<dbReference type="RefSeq" id="WP_002213657.1">
    <property type="nucleotide sequence ID" value="NC_003116.1"/>
</dbReference>
<dbReference type="SMR" id="A1IRQ3"/>
<dbReference type="EnsemblBacteria" id="CAM08447">
    <property type="protein sequence ID" value="CAM08447"/>
    <property type="gene ID" value="NMA1259"/>
</dbReference>
<dbReference type="KEGG" id="nma:NMA1259"/>
<dbReference type="HOGENOM" id="CLU_039977_0_0_4"/>
<dbReference type="UniPathway" id="UPA00138"/>
<dbReference type="Proteomes" id="UP000000626">
    <property type="component" value="Chromosome"/>
</dbReference>
<dbReference type="GO" id="GO:0005829">
    <property type="term" value="C:cytosol"/>
    <property type="evidence" value="ECO:0007669"/>
    <property type="project" value="TreeGrafter"/>
</dbReference>
<dbReference type="GO" id="GO:0042132">
    <property type="term" value="F:fructose 1,6-bisphosphate 1-phosphatase activity"/>
    <property type="evidence" value="ECO:0007669"/>
    <property type="project" value="UniProtKB-UniRule"/>
</dbReference>
<dbReference type="GO" id="GO:0000287">
    <property type="term" value="F:magnesium ion binding"/>
    <property type="evidence" value="ECO:0007669"/>
    <property type="project" value="UniProtKB-UniRule"/>
</dbReference>
<dbReference type="GO" id="GO:0030388">
    <property type="term" value="P:fructose 1,6-bisphosphate metabolic process"/>
    <property type="evidence" value="ECO:0007669"/>
    <property type="project" value="TreeGrafter"/>
</dbReference>
<dbReference type="GO" id="GO:0006002">
    <property type="term" value="P:fructose 6-phosphate metabolic process"/>
    <property type="evidence" value="ECO:0007669"/>
    <property type="project" value="TreeGrafter"/>
</dbReference>
<dbReference type="GO" id="GO:0006000">
    <property type="term" value="P:fructose metabolic process"/>
    <property type="evidence" value="ECO:0007669"/>
    <property type="project" value="TreeGrafter"/>
</dbReference>
<dbReference type="GO" id="GO:0006094">
    <property type="term" value="P:gluconeogenesis"/>
    <property type="evidence" value="ECO:0007669"/>
    <property type="project" value="UniProtKB-UniRule"/>
</dbReference>
<dbReference type="GO" id="GO:0005986">
    <property type="term" value="P:sucrose biosynthetic process"/>
    <property type="evidence" value="ECO:0007669"/>
    <property type="project" value="TreeGrafter"/>
</dbReference>
<dbReference type="CDD" id="cd00354">
    <property type="entry name" value="FBPase"/>
    <property type="match status" value="1"/>
</dbReference>
<dbReference type="FunFam" id="3.30.540.10:FF:000006">
    <property type="entry name" value="Fructose-1,6-bisphosphatase class 1"/>
    <property type="match status" value="1"/>
</dbReference>
<dbReference type="FunFam" id="3.40.190.80:FF:000011">
    <property type="entry name" value="Fructose-1,6-bisphosphatase class 1"/>
    <property type="match status" value="1"/>
</dbReference>
<dbReference type="Gene3D" id="3.40.190.80">
    <property type="match status" value="1"/>
</dbReference>
<dbReference type="Gene3D" id="3.30.540.10">
    <property type="entry name" value="Fructose-1,6-Bisphosphatase, subunit A, domain 1"/>
    <property type="match status" value="1"/>
</dbReference>
<dbReference type="HAMAP" id="MF_01855">
    <property type="entry name" value="FBPase_class1"/>
    <property type="match status" value="1"/>
</dbReference>
<dbReference type="InterPro" id="IPR044015">
    <property type="entry name" value="FBPase_C_dom"/>
</dbReference>
<dbReference type="InterPro" id="IPR000146">
    <property type="entry name" value="FBPase_class-1"/>
</dbReference>
<dbReference type="InterPro" id="IPR033391">
    <property type="entry name" value="FBPase_N"/>
</dbReference>
<dbReference type="InterPro" id="IPR028343">
    <property type="entry name" value="FBPtase"/>
</dbReference>
<dbReference type="NCBIfam" id="NF006779">
    <property type="entry name" value="PRK09293.1-3"/>
    <property type="match status" value="1"/>
</dbReference>
<dbReference type="NCBIfam" id="NF006780">
    <property type="entry name" value="PRK09293.1-4"/>
    <property type="match status" value="1"/>
</dbReference>
<dbReference type="PANTHER" id="PTHR11556">
    <property type="entry name" value="FRUCTOSE-1,6-BISPHOSPHATASE-RELATED"/>
    <property type="match status" value="1"/>
</dbReference>
<dbReference type="PANTHER" id="PTHR11556:SF35">
    <property type="entry name" value="SEDOHEPTULOSE-1,7-BISPHOSPHATASE, CHLOROPLASTIC"/>
    <property type="match status" value="1"/>
</dbReference>
<dbReference type="Pfam" id="PF00316">
    <property type="entry name" value="FBPase"/>
    <property type="match status" value="1"/>
</dbReference>
<dbReference type="Pfam" id="PF18913">
    <property type="entry name" value="FBPase_C"/>
    <property type="match status" value="1"/>
</dbReference>
<dbReference type="PIRSF" id="PIRSF500210">
    <property type="entry name" value="FBPtase"/>
    <property type="match status" value="1"/>
</dbReference>
<dbReference type="PIRSF" id="PIRSF000904">
    <property type="entry name" value="FBPtase_SBPase"/>
    <property type="match status" value="1"/>
</dbReference>
<dbReference type="PRINTS" id="PR00115">
    <property type="entry name" value="F16BPHPHTASE"/>
</dbReference>
<dbReference type="SUPFAM" id="SSF56655">
    <property type="entry name" value="Carbohydrate phosphatase"/>
    <property type="match status" value="1"/>
</dbReference>